<keyword id="KW-0067">ATP-binding</keyword>
<keyword id="KW-0436">Ligase</keyword>
<keyword id="KW-0479">Metal-binding</keyword>
<keyword id="KW-0547">Nucleotide-binding</keyword>
<keyword id="KW-0671">Queuosine biosynthesis</keyword>
<keyword id="KW-0862">Zinc</keyword>
<sequence length="232" mass="25284">MKTLVICSGGLDSVSLAHKMAAEHELTGLLSFDYGQRHKKELDFAQACAKRLGVPHQIIDIRTIGASLTGSALTDDVDVPDGHYAEETMKVTVVPNRNAIMLVIAFGVAAAQKADAVALAVHGGDHFIYPDCRPGFIEAFQTMQKHALDGYADVKLLAPYVHATKADIVADGAKYRTPFEATWSCYKGADRHCGRCGTCVERREAFHLAGIDDPTSYEDADFWRATTQKRNA</sequence>
<organism>
    <name type="scientific">Brucella suis biovar 1 (strain 1330)</name>
    <dbReference type="NCBI Taxonomy" id="204722"/>
    <lineage>
        <taxon>Bacteria</taxon>
        <taxon>Pseudomonadati</taxon>
        <taxon>Pseudomonadota</taxon>
        <taxon>Alphaproteobacteria</taxon>
        <taxon>Hyphomicrobiales</taxon>
        <taxon>Brucellaceae</taxon>
        <taxon>Brucella/Ochrobactrum group</taxon>
        <taxon>Brucella</taxon>
    </lineage>
</organism>
<name>QUEC_BRUSU</name>
<evidence type="ECO:0000255" key="1">
    <source>
        <dbReference type="HAMAP-Rule" id="MF_01633"/>
    </source>
</evidence>
<proteinExistence type="inferred from homology"/>
<accession>Q8FYB3</accession>
<accession>G0K8B3</accession>
<feature type="chain" id="PRO_0000246816" description="7-cyano-7-deazaguanine synthase">
    <location>
        <begin position="1"/>
        <end position="232"/>
    </location>
</feature>
<feature type="binding site" evidence="1">
    <location>
        <begin position="7"/>
        <end position="17"/>
    </location>
    <ligand>
        <name>ATP</name>
        <dbReference type="ChEBI" id="CHEBI:30616"/>
    </ligand>
</feature>
<feature type="binding site" evidence="1">
    <location>
        <position position="185"/>
    </location>
    <ligand>
        <name>Zn(2+)</name>
        <dbReference type="ChEBI" id="CHEBI:29105"/>
    </ligand>
</feature>
<feature type="binding site" evidence="1">
    <location>
        <position position="193"/>
    </location>
    <ligand>
        <name>Zn(2+)</name>
        <dbReference type="ChEBI" id="CHEBI:29105"/>
    </ligand>
</feature>
<feature type="binding site" evidence="1">
    <location>
        <position position="196"/>
    </location>
    <ligand>
        <name>Zn(2+)</name>
        <dbReference type="ChEBI" id="CHEBI:29105"/>
    </ligand>
</feature>
<feature type="binding site" evidence="1">
    <location>
        <position position="199"/>
    </location>
    <ligand>
        <name>Zn(2+)</name>
        <dbReference type="ChEBI" id="CHEBI:29105"/>
    </ligand>
</feature>
<dbReference type="EC" id="6.3.4.20" evidence="1"/>
<dbReference type="EMBL" id="AE014291">
    <property type="protein sequence ID" value="AAN30862.1"/>
    <property type="molecule type" value="Genomic_DNA"/>
</dbReference>
<dbReference type="EMBL" id="CP002997">
    <property type="protein sequence ID" value="AEM19279.1"/>
    <property type="molecule type" value="Genomic_DNA"/>
</dbReference>
<dbReference type="RefSeq" id="WP_004691111.1">
    <property type="nucleotide sequence ID" value="NZ_KN046804.1"/>
</dbReference>
<dbReference type="SMR" id="Q8FYB3"/>
<dbReference type="GeneID" id="55591553"/>
<dbReference type="KEGG" id="bms:BR1972"/>
<dbReference type="KEGG" id="bsi:BS1330_I1966"/>
<dbReference type="PATRIC" id="fig|204722.21.peg.3058"/>
<dbReference type="HOGENOM" id="CLU_081854_1_0_5"/>
<dbReference type="PhylomeDB" id="Q8FYB3"/>
<dbReference type="UniPathway" id="UPA00391"/>
<dbReference type="Proteomes" id="UP000007104">
    <property type="component" value="Chromosome I"/>
</dbReference>
<dbReference type="GO" id="GO:0005524">
    <property type="term" value="F:ATP binding"/>
    <property type="evidence" value="ECO:0007669"/>
    <property type="project" value="UniProtKB-UniRule"/>
</dbReference>
<dbReference type="GO" id="GO:0016879">
    <property type="term" value="F:ligase activity, forming carbon-nitrogen bonds"/>
    <property type="evidence" value="ECO:0007669"/>
    <property type="project" value="UniProtKB-UniRule"/>
</dbReference>
<dbReference type="GO" id="GO:0008270">
    <property type="term" value="F:zinc ion binding"/>
    <property type="evidence" value="ECO:0007669"/>
    <property type="project" value="UniProtKB-UniRule"/>
</dbReference>
<dbReference type="GO" id="GO:0008616">
    <property type="term" value="P:queuosine biosynthetic process"/>
    <property type="evidence" value="ECO:0007669"/>
    <property type="project" value="UniProtKB-UniRule"/>
</dbReference>
<dbReference type="CDD" id="cd01995">
    <property type="entry name" value="QueC-like"/>
    <property type="match status" value="1"/>
</dbReference>
<dbReference type="Gene3D" id="3.40.50.620">
    <property type="entry name" value="HUPs"/>
    <property type="match status" value="1"/>
</dbReference>
<dbReference type="HAMAP" id="MF_01633">
    <property type="entry name" value="QueC"/>
    <property type="match status" value="1"/>
</dbReference>
<dbReference type="InterPro" id="IPR018317">
    <property type="entry name" value="QueC"/>
</dbReference>
<dbReference type="InterPro" id="IPR014729">
    <property type="entry name" value="Rossmann-like_a/b/a_fold"/>
</dbReference>
<dbReference type="NCBIfam" id="TIGR00364">
    <property type="entry name" value="7-cyano-7-deazaguanine synthase QueC"/>
    <property type="match status" value="1"/>
</dbReference>
<dbReference type="PANTHER" id="PTHR42914">
    <property type="entry name" value="7-CYANO-7-DEAZAGUANINE SYNTHASE"/>
    <property type="match status" value="1"/>
</dbReference>
<dbReference type="PANTHER" id="PTHR42914:SF1">
    <property type="entry name" value="7-CYANO-7-DEAZAGUANINE SYNTHASE"/>
    <property type="match status" value="1"/>
</dbReference>
<dbReference type="Pfam" id="PF06508">
    <property type="entry name" value="QueC"/>
    <property type="match status" value="1"/>
</dbReference>
<dbReference type="PIRSF" id="PIRSF006293">
    <property type="entry name" value="ExsB"/>
    <property type="match status" value="1"/>
</dbReference>
<dbReference type="SUPFAM" id="SSF52402">
    <property type="entry name" value="Adenine nucleotide alpha hydrolases-like"/>
    <property type="match status" value="1"/>
</dbReference>
<protein>
    <recommendedName>
        <fullName evidence="1">7-cyano-7-deazaguanine synthase</fullName>
        <ecNumber evidence="1">6.3.4.20</ecNumber>
    </recommendedName>
    <alternativeName>
        <fullName evidence="1">7-cyano-7-carbaguanine synthase</fullName>
    </alternativeName>
    <alternativeName>
        <fullName evidence="1">PreQ(0) synthase</fullName>
    </alternativeName>
    <alternativeName>
        <fullName evidence="1">Queuosine biosynthesis protein QueC</fullName>
    </alternativeName>
</protein>
<reference key="1">
    <citation type="journal article" date="2002" name="Proc. Natl. Acad. Sci. U.S.A.">
        <title>The Brucella suis genome reveals fundamental similarities between animal and plant pathogens and symbionts.</title>
        <authorList>
            <person name="Paulsen I.T."/>
            <person name="Seshadri R."/>
            <person name="Nelson K.E."/>
            <person name="Eisen J.A."/>
            <person name="Heidelberg J.F."/>
            <person name="Read T.D."/>
            <person name="Dodson R.J."/>
            <person name="Umayam L.A."/>
            <person name="Brinkac L.M."/>
            <person name="Beanan M.J."/>
            <person name="Daugherty S.C."/>
            <person name="DeBoy R.T."/>
            <person name="Durkin A.S."/>
            <person name="Kolonay J.F."/>
            <person name="Madupu R."/>
            <person name="Nelson W.C."/>
            <person name="Ayodeji B."/>
            <person name="Kraul M."/>
            <person name="Shetty J."/>
            <person name="Malek J.A."/>
            <person name="Van Aken S.E."/>
            <person name="Riedmuller S."/>
            <person name="Tettelin H."/>
            <person name="Gill S.R."/>
            <person name="White O."/>
            <person name="Salzberg S.L."/>
            <person name="Hoover D.L."/>
            <person name="Lindler L.E."/>
            <person name="Halling S.M."/>
            <person name="Boyle S.M."/>
            <person name="Fraser C.M."/>
        </authorList>
    </citation>
    <scope>NUCLEOTIDE SEQUENCE [LARGE SCALE GENOMIC DNA]</scope>
    <source>
        <strain>1330</strain>
    </source>
</reference>
<reference key="2">
    <citation type="journal article" date="2011" name="J. Bacteriol.">
        <title>Revised genome sequence of Brucella suis 1330.</title>
        <authorList>
            <person name="Tae H."/>
            <person name="Shallom S."/>
            <person name="Settlage R."/>
            <person name="Preston D."/>
            <person name="Adams L.G."/>
            <person name="Garner H.R."/>
        </authorList>
    </citation>
    <scope>NUCLEOTIDE SEQUENCE [LARGE SCALE GENOMIC DNA]</scope>
    <source>
        <strain>1330</strain>
    </source>
</reference>
<gene>
    <name evidence="1" type="primary">queC</name>
    <name type="ordered locus">BR1972</name>
    <name type="ordered locus">BS1330_I1966</name>
</gene>
<comment type="function">
    <text evidence="1">Catalyzes the ATP-dependent conversion of 7-carboxy-7-deazaguanine (CDG) to 7-cyano-7-deazaguanine (preQ(0)).</text>
</comment>
<comment type="catalytic activity">
    <reaction evidence="1">
        <text>7-carboxy-7-deazaguanine + NH4(+) + ATP = 7-cyano-7-deazaguanine + ADP + phosphate + H2O + H(+)</text>
        <dbReference type="Rhea" id="RHEA:27982"/>
        <dbReference type="ChEBI" id="CHEBI:15377"/>
        <dbReference type="ChEBI" id="CHEBI:15378"/>
        <dbReference type="ChEBI" id="CHEBI:28938"/>
        <dbReference type="ChEBI" id="CHEBI:30616"/>
        <dbReference type="ChEBI" id="CHEBI:43474"/>
        <dbReference type="ChEBI" id="CHEBI:45075"/>
        <dbReference type="ChEBI" id="CHEBI:61036"/>
        <dbReference type="ChEBI" id="CHEBI:456216"/>
        <dbReference type="EC" id="6.3.4.20"/>
    </reaction>
</comment>
<comment type="cofactor">
    <cofactor evidence="1">
        <name>Zn(2+)</name>
        <dbReference type="ChEBI" id="CHEBI:29105"/>
    </cofactor>
    <text evidence="1">Binds 1 zinc ion per subunit.</text>
</comment>
<comment type="pathway">
    <text evidence="1">Purine metabolism; 7-cyano-7-deazaguanine biosynthesis.</text>
</comment>
<comment type="similarity">
    <text evidence="1">Belongs to the QueC family.</text>
</comment>